<sequence>MEFSTKTEILQEQQAGAQLFVCTEEAQLNHPTALALLSSLEEGQNFADTKIPTGNGLQAVAVCCLKSTGRAALNKAAAEAAKWAQNQETVNVDVHAFEEAQAAAVAEAFAIAFGNAAYRFDRYKKEAKPAKFAEAVFHSAHEAAVKEALRVAEAQVYGQSLCRDLGNAAPNECTPEFLARTAKAEAEKLGAHAKIIEKDYIKENMGSFWSVAKGSVEDPYLVELSYFGAADKEAAPVVLVGKGITFDTGGISLKPGLNMDEMKFDMCGAATVISTFCAAVKLQLPINLIAVVATCENMPSGAANKPGDVVKSMKGLTIEVLNTDAEGRLILCDALTYAEQFKPKAVIDVATLTGACIVALGHDVSGVMGNNQDLVDSLLAASYNVDDKAWQLPLFETYKDQLKSNFADIPNIGTPGAGTITAATFLSYFTEGYPWAHLDIAGTAWKSGAEKGATGRPVPLLLNYLRNL</sequence>
<proteinExistence type="inferred from homology"/>
<reference key="1">
    <citation type="journal article" date="2000" name="Nature">
        <title>Complete DNA sequence of a serogroup A strain of Neisseria meningitidis Z2491.</title>
        <authorList>
            <person name="Parkhill J."/>
            <person name="Achtman M."/>
            <person name="James K.D."/>
            <person name="Bentley S.D."/>
            <person name="Churcher C.M."/>
            <person name="Klee S.R."/>
            <person name="Morelli G."/>
            <person name="Basham D."/>
            <person name="Brown D."/>
            <person name="Chillingworth T."/>
            <person name="Davies R.M."/>
            <person name="Davis P."/>
            <person name="Devlin K."/>
            <person name="Feltwell T."/>
            <person name="Hamlin N."/>
            <person name="Holroyd S."/>
            <person name="Jagels K."/>
            <person name="Leather S."/>
            <person name="Moule S."/>
            <person name="Mungall K.L."/>
            <person name="Quail M.A."/>
            <person name="Rajandream M.A."/>
            <person name="Rutherford K.M."/>
            <person name="Simmonds M."/>
            <person name="Skelton J."/>
            <person name="Whitehead S."/>
            <person name="Spratt B.G."/>
            <person name="Barrell B.G."/>
        </authorList>
    </citation>
    <scope>NUCLEOTIDE SEQUENCE [LARGE SCALE GENOMIC DNA]</scope>
    <source>
        <strain>DSM 15465 / Z2491</strain>
    </source>
</reference>
<feature type="chain" id="PRO_0000165772" description="Probable cytosol aminopeptidase">
    <location>
        <begin position="1"/>
        <end position="468"/>
    </location>
</feature>
<feature type="active site" evidence="1">
    <location>
        <position position="254"/>
    </location>
</feature>
<feature type="active site" evidence="1">
    <location>
        <position position="328"/>
    </location>
</feature>
<feature type="binding site" evidence="1">
    <location>
        <position position="242"/>
    </location>
    <ligand>
        <name>Mn(2+)</name>
        <dbReference type="ChEBI" id="CHEBI:29035"/>
        <label>2</label>
    </ligand>
</feature>
<feature type="binding site" evidence="1">
    <location>
        <position position="247"/>
    </location>
    <ligand>
        <name>Mn(2+)</name>
        <dbReference type="ChEBI" id="CHEBI:29035"/>
        <label>1</label>
    </ligand>
</feature>
<feature type="binding site" evidence="1">
    <location>
        <position position="247"/>
    </location>
    <ligand>
        <name>Mn(2+)</name>
        <dbReference type="ChEBI" id="CHEBI:29035"/>
        <label>2</label>
    </ligand>
</feature>
<feature type="binding site" evidence="1">
    <location>
        <position position="265"/>
    </location>
    <ligand>
        <name>Mn(2+)</name>
        <dbReference type="ChEBI" id="CHEBI:29035"/>
        <label>2</label>
    </ligand>
</feature>
<feature type="binding site" evidence="1">
    <location>
        <position position="324"/>
    </location>
    <ligand>
        <name>Mn(2+)</name>
        <dbReference type="ChEBI" id="CHEBI:29035"/>
        <label>1</label>
    </ligand>
</feature>
<feature type="binding site" evidence="1">
    <location>
        <position position="326"/>
    </location>
    <ligand>
        <name>Mn(2+)</name>
        <dbReference type="ChEBI" id="CHEBI:29035"/>
        <label>1</label>
    </ligand>
</feature>
<feature type="binding site" evidence="1">
    <location>
        <position position="326"/>
    </location>
    <ligand>
        <name>Mn(2+)</name>
        <dbReference type="ChEBI" id="CHEBI:29035"/>
        <label>2</label>
    </ligand>
</feature>
<evidence type="ECO:0000255" key="1">
    <source>
        <dbReference type="HAMAP-Rule" id="MF_00181"/>
    </source>
</evidence>
<dbReference type="EC" id="3.4.11.1" evidence="1"/>
<dbReference type="EC" id="3.4.11.10" evidence="1"/>
<dbReference type="EMBL" id="AL157959">
    <property type="protein sequence ID" value="CAM08885.1"/>
    <property type="molecule type" value="Genomic_DNA"/>
</dbReference>
<dbReference type="PIR" id="F81800">
    <property type="entry name" value="F81800"/>
</dbReference>
<dbReference type="RefSeq" id="WP_002237207.1">
    <property type="nucleotide sequence ID" value="NC_003116.1"/>
</dbReference>
<dbReference type="SMR" id="Q9JTI8"/>
<dbReference type="MEROPS" id="M17.003"/>
<dbReference type="EnsemblBacteria" id="CAM08885">
    <property type="protein sequence ID" value="CAM08885"/>
    <property type="gene ID" value="NMA1758"/>
</dbReference>
<dbReference type="GeneID" id="93387819"/>
<dbReference type="KEGG" id="nma:NMA1758"/>
<dbReference type="HOGENOM" id="CLU_013734_0_1_4"/>
<dbReference type="Proteomes" id="UP000000626">
    <property type="component" value="Chromosome"/>
</dbReference>
<dbReference type="GO" id="GO:0005737">
    <property type="term" value="C:cytoplasm"/>
    <property type="evidence" value="ECO:0007669"/>
    <property type="project" value="UniProtKB-SubCell"/>
</dbReference>
<dbReference type="GO" id="GO:0030145">
    <property type="term" value="F:manganese ion binding"/>
    <property type="evidence" value="ECO:0007669"/>
    <property type="project" value="UniProtKB-UniRule"/>
</dbReference>
<dbReference type="GO" id="GO:0070006">
    <property type="term" value="F:metalloaminopeptidase activity"/>
    <property type="evidence" value="ECO:0007669"/>
    <property type="project" value="InterPro"/>
</dbReference>
<dbReference type="GO" id="GO:0006508">
    <property type="term" value="P:proteolysis"/>
    <property type="evidence" value="ECO:0007669"/>
    <property type="project" value="UniProtKB-KW"/>
</dbReference>
<dbReference type="CDD" id="cd00433">
    <property type="entry name" value="Peptidase_M17"/>
    <property type="match status" value="1"/>
</dbReference>
<dbReference type="Gene3D" id="3.40.220.10">
    <property type="entry name" value="Leucine Aminopeptidase, subunit E, domain 1"/>
    <property type="match status" value="1"/>
</dbReference>
<dbReference type="Gene3D" id="3.40.630.10">
    <property type="entry name" value="Zn peptidases"/>
    <property type="match status" value="1"/>
</dbReference>
<dbReference type="HAMAP" id="MF_00181">
    <property type="entry name" value="Cytosol_peptidase_M17"/>
    <property type="match status" value="1"/>
</dbReference>
<dbReference type="InterPro" id="IPR011356">
    <property type="entry name" value="Leucine_aapep/pepB"/>
</dbReference>
<dbReference type="InterPro" id="IPR043472">
    <property type="entry name" value="Macro_dom-like"/>
</dbReference>
<dbReference type="InterPro" id="IPR000819">
    <property type="entry name" value="Peptidase_M17_C"/>
</dbReference>
<dbReference type="InterPro" id="IPR023042">
    <property type="entry name" value="Peptidase_M17_leu_NH2_pept"/>
</dbReference>
<dbReference type="NCBIfam" id="NF002074">
    <property type="entry name" value="PRK00913.1-4"/>
    <property type="match status" value="1"/>
</dbReference>
<dbReference type="PANTHER" id="PTHR11963:SF23">
    <property type="entry name" value="CYTOSOL AMINOPEPTIDASE"/>
    <property type="match status" value="1"/>
</dbReference>
<dbReference type="PANTHER" id="PTHR11963">
    <property type="entry name" value="LEUCINE AMINOPEPTIDASE-RELATED"/>
    <property type="match status" value="1"/>
</dbReference>
<dbReference type="Pfam" id="PF00883">
    <property type="entry name" value="Peptidase_M17"/>
    <property type="match status" value="1"/>
</dbReference>
<dbReference type="PRINTS" id="PR00481">
    <property type="entry name" value="LAMNOPPTDASE"/>
</dbReference>
<dbReference type="SUPFAM" id="SSF52949">
    <property type="entry name" value="Macro domain-like"/>
    <property type="match status" value="1"/>
</dbReference>
<dbReference type="SUPFAM" id="SSF53187">
    <property type="entry name" value="Zn-dependent exopeptidases"/>
    <property type="match status" value="1"/>
</dbReference>
<dbReference type="PROSITE" id="PS00631">
    <property type="entry name" value="CYTOSOL_AP"/>
    <property type="match status" value="1"/>
</dbReference>
<comment type="function">
    <text evidence="1">Presumably involved in the processing and regular turnover of intracellular proteins. Catalyzes the removal of unsubstituted N-terminal amino acids from various peptides.</text>
</comment>
<comment type="catalytic activity">
    <reaction evidence="1">
        <text>Release of an N-terminal amino acid, Xaa-|-Yaa-, in which Xaa is preferably Leu, but may be other amino acids including Pro although not Arg or Lys, and Yaa may be Pro. Amino acid amides and methyl esters are also readily hydrolyzed, but rates on arylamides are exceedingly low.</text>
        <dbReference type="EC" id="3.4.11.1"/>
    </reaction>
</comment>
<comment type="catalytic activity">
    <reaction evidence="1">
        <text>Release of an N-terminal amino acid, preferentially leucine, but not glutamic or aspartic acids.</text>
        <dbReference type="EC" id="3.4.11.10"/>
    </reaction>
</comment>
<comment type="cofactor">
    <cofactor evidence="1">
        <name>Mn(2+)</name>
        <dbReference type="ChEBI" id="CHEBI:29035"/>
    </cofactor>
    <text evidence="1">Binds 2 manganese ions per subunit.</text>
</comment>
<comment type="subcellular location">
    <subcellularLocation>
        <location evidence="1">Cytoplasm</location>
    </subcellularLocation>
</comment>
<comment type="similarity">
    <text evidence="1">Belongs to the peptidase M17 family.</text>
</comment>
<accession>Q9JTI8</accession>
<accession>A1ISX3</accession>
<organism>
    <name type="scientific">Neisseria meningitidis serogroup A / serotype 4A (strain DSM 15465 / Z2491)</name>
    <dbReference type="NCBI Taxonomy" id="122587"/>
    <lineage>
        <taxon>Bacteria</taxon>
        <taxon>Pseudomonadati</taxon>
        <taxon>Pseudomonadota</taxon>
        <taxon>Betaproteobacteria</taxon>
        <taxon>Neisseriales</taxon>
        <taxon>Neisseriaceae</taxon>
        <taxon>Neisseria</taxon>
    </lineage>
</organism>
<gene>
    <name evidence="1" type="primary">pepA</name>
    <name type="ordered locus">NMA1758</name>
</gene>
<name>AMPA_NEIMA</name>
<keyword id="KW-0031">Aminopeptidase</keyword>
<keyword id="KW-0963">Cytoplasm</keyword>
<keyword id="KW-0378">Hydrolase</keyword>
<keyword id="KW-0464">Manganese</keyword>
<keyword id="KW-0479">Metal-binding</keyword>
<keyword id="KW-0645">Protease</keyword>
<protein>
    <recommendedName>
        <fullName evidence="1">Probable cytosol aminopeptidase</fullName>
        <ecNumber evidence="1">3.4.11.1</ecNumber>
    </recommendedName>
    <alternativeName>
        <fullName evidence="1">Leucine aminopeptidase</fullName>
        <shortName evidence="1">LAP</shortName>
        <ecNumber evidence="1">3.4.11.10</ecNumber>
    </alternativeName>
    <alternativeName>
        <fullName evidence="1">Leucyl aminopeptidase</fullName>
    </alternativeName>
</protein>